<keyword id="KW-0067">ATP-binding</keyword>
<keyword id="KW-0418">Kinase</keyword>
<keyword id="KW-0545">Nucleotide biosynthesis</keyword>
<keyword id="KW-0547">Nucleotide-binding</keyword>
<keyword id="KW-1185">Reference proteome</keyword>
<keyword id="KW-0808">Transferase</keyword>
<proteinExistence type="inferred from homology"/>
<dbReference type="EC" id="2.7.4.9" evidence="1"/>
<dbReference type="EMBL" id="CP001365">
    <property type="protein sequence ID" value="ACM57466.1"/>
    <property type="molecule type" value="Genomic_DNA"/>
</dbReference>
<dbReference type="RefSeq" id="WP_015910591.1">
    <property type="nucleotide sequence ID" value="NC_012029.1"/>
</dbReference>
<dbReference type="SMR" id="B9LQ28"/>
<dbReference type="GeneID" id="7400082"/>
<dbReference type="KEGG" id="hla:Hlac_1888"/>
<dbReference type="eggNOG" id="arCOG01891">
    <property type="taxonomic scope" value="Archaea"/>
</dbReference>
<dbReference type="HOGENOM" id="CLU_049131_0_2_2"/>
<dbReference type="Proteomes" id="UP000000740">
    <property type="component" value="Chromosome 1"/>
</dbReference>
<dbReference type="GO" id="GO:0005737">
    <property type="term" value="C:cytoplasm"/>
    <property type="evidence" value="ECO:0007669"/>
    <property type="project" value="TreeGrafter"/>
</dbReference>
<dbReference type="GO" id="GO:0005524">
    <property type="term" value="F:ATP binding"/>
    <property type="evidence" value="ECO:0007669"/>
    <property type="project" value="UniProtKB-UniRule"/>
</dbReference>
<dbReference type="GO" id="GO:0004798">
    <property type="term" value="F:dTMP kinase activity"/>
    <property type="evidence" value="ECO:0007669"/>
    <property type="project" value="UniProtKB-UniRule"/>
</dbReference>
<dbReference type="GO" id="GO:0006233">
    <property type="term" value="P:dTDP biosynthetic process"/>
    <property type="evidence" value="ECO:0007669"/>
    <property type="project" value="InterPro"/>
</dbReference>
<dbReference type="GO" id="GO:0006235">
    <property type="term" value="P:dTTP biosynthetic process"/>
    <property type="evidence" value="ECO:0007669"/>
    <property type="project" value="UniProtKB-UniRule"/>
</dbReference>
<dbReference type="GO" id="GO:0006227">
    <property type="term" value="P:dUDP biosynthetic process"/>
    <property type="evidence" value="ECO:0007669"/>
    <property type="project" value="TreeGrafter"/>
</dbReference>
<dbReference type="CDD" id="cd01672">
    <property type="entry name" value="TMPK"/>
    <property type="match status" value="1"/>
</dbReference>
<dbReference type="Gene3D" id="3.40.50.300">
    <property type="entry name" value="P-loop containing nucleotide triphosphate hydrolases"/>
    <property type="match status" value="1"/>
</dbReference>
<dbReference type="HAMAP" id="MF_00165">
    <property type="entry name" value="Thymidylate_kinase"/>
    <property type="match status" value="1"/>
</dbReference>
<dbReference type="InterPro" id="IPR027417">
    <property type="entry name" value="P-loop_NTPase"/>
</dbReference>
<dbReference type="InterPro" id="IPR039430">
    <property type="entry name" value="Thymidylate_kin-like_dom"/>
</dbReference>
<dbReference type="InterPro" id="IPR018094">
    <property type="entry name" value="Thymidylate_kinase"/>
</dbReference>
<dbReference type="NCBIfam" id="TIGR00041">
    <property type="entry name" value="DTMP_kinase"/>
    <property type="match status" value="1"/>
</dbReference>
<dbReference type="PANTHER" id="PTHR10344">
    <property type="entry name" value="THYMIDYLATE KINASE"/>
    <property type="match status" value="1"/>
</dbReference>
<dbReference type="PANTHER" id="PTHR10344:SF4">
    <property type="entry name" value="UMP-CMP KINASE 2, MITOCHONDRIAL"/>
    <property type="match status" value="1"/>
</dbReference>
<dbReference type="Pfam" id="PF02223">
    <property type="entry name" value="Thymidylate_kin"/>
    <property type="match status" value="1"/>
</dbReference>
<dbReference type="SUPFAM" id="SSF52540">
    <property type="entry name" value="P-loop containing nucleoside triphosphate hydrolases"/>
    <property type="match status" value="1"/>
</dbReference>
<reference key="1">
    <citation type="journal article" date="2016" name="Stand. Genomic Sci.">
        <title>Complete genome sequence of the Antarctic Halorubrum lacusprofundi type strain ACAM 34.</title>
        <authorList>
            <person name="Anderson I.J."/>
            <person name="DasSarma P."/>
            <person name="Lucas S."/>
            <person name="Copeland A."/>
            <person name="Lapidus A."/>
            <person name="Del Rio T.G."/>
            <person name="Tice H."/>
            <person name="Dalin E."/>
            <person name="Bruce D.C."/>
            <person name="Goodwin L."/>
            <person name="Pitluck S."/>
            <person name="Sims D."/>
            <person name="Brettin T.S."/>
            <person name="Detter J.C."/>
            <person name="Han C.S."/>
            <person name="Larimer F."/>
            <person name="Hauser L."/>
            <person name="Land M."/>
            <person name="Ivanova N."/>
            <person name="Richardson P."/>
            <person name="Cavicchioli R."/>
            <person name="DasSarma S."/>
            <person name="Woese C.R."/>
            <person name="Kyrpides N.C."/>
        </authorList>
    </citation>
    <scope>NUCLEOTIDE SEQUENCE [LARGE SCALE GENOMIC DNA]</scope>
    <source>
        <strain>ATCC 49239 / DSM 5036 / JCM 8891 / ACAM 34</strain>
    </source>
</reference>
<sequence>MLITLEGLDGSGKTTVWEALHDVYPDATFTREPTDSWYGEAVDRSIAADDADPLAELFLLTADHADHLSGTIEPALADGDLVISDRYSDSRFAYQAATLAASDVDIDRPLEYIKGIHAAFSRPPDATIYLDLDAREAAERAGRTNKFEQDGYLAAVRKNYERLIDAEPDRFVRIDASQSPEAVIARVEEVLSELLGE</sequence>
<accession>B9LQ28</accession>
<comment type="catalytic activity">
    <reaction evidence="1">
        <text>dTMP + ATP = dTDP + ADP</text>
        <dbReference type="Rhea" id="RHEA:13517"/>
        <dbReference type="ChEBI" id="CHEBI:30616"/>
        <dbReference type="ChEBI" id="CHEBI:58369"/>
        <dbReference type="ChEBI" id="CHEBI:63528"/>
        <dbReference type="ChEBI" id="CHEBI:456216"/>
        <dbReference type="EC" id="2.7.4.9"/>
    </reaction>
</comment>
<comment type="similarity">
    <text evidence="1">Belongs to the thymidylate kinase family.</text>
</comment>
<organism>
    <name type="scientific">Halorubrum lacusprofundi (strain ATCC 49239 / DSM 5036 / JCM 8891 / ACAM 34)</name>
    <dbReference type="NCBI Taxonomy" id="416348"/>
    <lineage>
        <taxon>Archaea</taxon>
        <taxon>Methanobacteriati</taxon>
        <taxon>Methanobacteriota</taxon>
        <taxon>Stenosarchaea group</taxon>
        <taxon>Halobacteria</taxon>
        <taxon>Halobacteriales</taxon>
        <taxon>Haloferacaceae</taxon>
        <taxon>Halorubrum</taxon>
    </lineage>
</organism>
<protein>
    <recommendedName>
        <fullName evidence="1">Probable thymidylate kinase</fullName>
        <ecNumber evidence="1">2.7.4.9</ecNumber>
    </recommendedName>
    <alternativeName>
        <fullName evidence="1">dTMP kinase</fullName>
    </alternativeName>
</protein>
<name>KTHY_HALLT</name>
<evidence type="ECO:0000255" key="1">
    <source>
        <dbReference type="HAMAP-Rule" id="MF_00165"/>
    </source>
</evidence>
<feature type="chain" id="PRO_1000123579" description="Probable thymidylate kinase">
    <location>
        <begin position="1"/>
        <end position="197"/>
    </location>
</feature>
<feature type="binding site" evidence="1">
    <location>
        <begin position="7"/>
        <end position="14"/>
    </location>
    <ligand>
        <name>ATP</name>
        <dbReference type="ChEBI" id="CHEBI:30616"/>
    </ligand>
</feature>
<gene>
    <name evidence="1" type="primary">tmk</name>
    <name type="ordered locus">Hlac_1888</name>
</gene>